<gene>
    <name evidence="8" type="primary">Cpne1</name>
</gene>
<proteinExistence type="evidence at protein level"/>
<keyword id="KW-0007">Acetylation</keyword>
<keyword id="KW-0106">Calcium</keyword>
<keyword id="KW-1003">Cell membrane</keyword>
<keyword id="KW-0963">Cytoplasm</keyword>
<keyword id="KW-0221">Differentiation</keyword>
<keyword id="KW-0472">Membrane</keyword>
<keyword id="KW-0479">Metal-binding</keyword>
<keyword id="KW-0539">Nucleus</keyword>
<keyword id="KW-1185">Reference proteome</keyword>
<keyword id="KW-0677">Repeat</keyword>
<keyword id="KW-0678">Repressor</keyword>
<keyword id="KW-0804">Transcription</keyword>
<keyword id="KW-0805">Transcription regulation</keyword>
<comment type="function">
    <text evidence="1">Calcium-dependent phospholipid-binding protein that plays a role in calcium-mediated intracellular processes. Involved in the TNF-alpha receptor signaling pathway in a calcium-dependent manner. Exhibits calcium-dependent phospholipid binding properties. Plays a role in neuronal progenitor cell differentiation; induces neurite outgrowth via a AKT-dependent signaling cascade and calcium-independent manner. May recruit target proteins to the cell membrane in a calcium-dependent manner. May function in membrane trafficking. Involved in TNF-alpha-induced NF-kappa-B transcriptional repression by inducing endoprotease processing of the transcription factor NF-kappa-B p65/RELA subunit. Also induces endoprotease processing of NF-kappa-B p50/NFKB1, p52/NFKB2, RELB and REL.</text>
</comment>
<comment type="cofactor">
    <cofactor evidence="2">
        <name>Ca(2+)</name>
        <dbReference type="ChEBI" id="CHEBI:29108"/>
    </cofactor>
</comment>
<comment type="subunit">
    <text evidence="1">Homodimer; homodimerizes via its C2 domains. Interacts with p65/RELA (via N-terminus); this interaction induces proteolytic cleavage of p65/RELA subunit and inhibition of NF-kappa-B transcriptional activity. Interacts (via VWFA domain) with ACTB, CCDC22, MYCBP2, PPP5C, RDX and UBE2O.</text>
</comment>
<comment type="subcellular location">
    <subcellularLocation>
        <location evidence="1">Nucleus</location>
    </subcellularLocation>
    <subcellularLocation>
        <location evidence="1">Cytoplasm</location>
    </subcellularLocation>
    <subcellularLocation>
        <location evidence="1">Cell membrane</location>
    </subcellularLocation>
    <text evidence="1">Translocates to the cell membrane in a calcium-dependent manner.</text>
</comment>
<comment type="tissue specificity">
    <text evidence="4">Expressed in liver, brain, heart, intestine, kidney and lung (at protein level) (PubMed:11123945).</text>
</comment>
<comment type="domain">
    <text evidence="1">C2 domains are necessary for calcium-dependent cell membrane association. C2 domains are necessary for neuronal progenitor cell differentiation in a calcium-independent manner.</text>
</comment>
<comment type="similarity">
    <text evidence="5">Belongs to the copine family.</text>
</comment>
<evidence type="ECO:0000250" key="1">
    <source>
        <dbReference type="UniProtKB" id="Q99829"/>
    </source>
</evidence>
<evidence type="ECO:0000255" key="2">
    <source>
        <dbReference type="PROSITE-ProRule" id="PRU00041"/>
    </source>
</evidence>
<evidence type="ECO:0000255" key="3">
    <source>
        <dbReference type="PROSITE-ProRule" id="PRU00219"/>
    </source>
</evidence>
<evidence type="ECO:0000269" key="4">
    <source>
    </source>
</evidence>
<evidence type="ECO:0000305" key="5"/>
<evidence type="ECO:0000312" key="6">
    <source>
        <dbReference type="EMBL" id="CAO00504.1"/>
    </source>
</evidence>
<evidence type="ECO:0000312" key="7">
    <source>
        <dbReference type="EMBL" id="EDL85869.1"/>
    </source>
</evidence>
<evidence type="ECO:0000312" key="8">
    <source>
        <dbReference type="RGD" id="1311148"/>
    </source>
</evidence>
<protein>
    <recommendedName>
        <fullName evidence="5">Copine-1</fullName>
    </recommendedName>
    <alternativeName>
        <fullName evidence="1 8">Copine I</fullName>
    </alternativeName>
</protein>
<sequence length="536" mass="58844">MAHCVTLVQLSVSCDHLIDKDIGSKSDPLCVLLQDVGGAWAELCRTERVRNCSSPAFSKTLQIEYYFETVQKLRFGIYDIDNKTPELGDDDFLGGAECSLGQIVSSQTLTLPLMLKPGKPAGRGTITVSAQELKDSRVVTMEVEARNLDKKDFLGKSDPFLEFFRQGDGKWHLAYRTEVVKNNLNPTWKRFSVSLQHFCGGDLNTPIQVRCSDYDSDGSHDLIGTFHTTLAQLQAVPAEFECIHPEKQQRKKSYKNSGTVCVKTCRVETEYSFLDYVMGGCQINFTVGVDFTGSNGDPSSPDSLHYLSPTGVNEYLTALWSVGSVVQDYDSDKLFPAFGFGAQVPPDWQVSHEFALNFNPSNPYCAGIQGIVDAYRQALPQVRLYGPTNFAPIINHVARFAAQAAQQRTASQYFVLLLLTDGAVTDVEATCKAVVEASKLPMSVIIVGVGGADFEVMEQLDADGGPLRTRSGEAAARDIVQFVPYRRFQNAPRETLAMTVLAEVPTQMVSYFKAQGWAPLKTLPAPAKGPAQAPQV</sequence>
<feature type="chain" id="PRO_0000434560" description="Copine-1">
    <location>
        <begin position="1"/>
        <end position="536"/>
    </location>
</feature>
<feature type="domain" description="C2 1" evidence="2">
    <location>
        <begin position="1"/>
        <end position="113"/>
    </location>
</feature>
<feature type="domain" description="C2 2" evidence="2">
    <location>
        <begin position="122"/>
        <end position="244"/>
    </location>
</feature>
<feature type="domain" description="VWFA" evidence="3">
    <location>
        <begin position="282"/>
        <end position="484"/>
    </location>
</feature>
<feature type="binding site" evidence="2">
    <location>
        <position position="21"/>
    </location>
    <ligand>
        <name>Ca(2+)</name>
        <dbReference type="ChEBI" id="CHEBI:29108"/>
        <label>1</label>
    </ligand>
</feature>
<feature type="binding site" evidence="2">
    <location>
        <position position="21"/>
    </location>
    <ligand>
        <name>Ca(2+)</name>
        <dbReference type="ChEBI" id="CHEBI:29108"/>
        <label>2</label>
    </ligand>
</feature>
<feature type="binding site" evidence="2">
    <location>
        <position position="27"/>
    </location>
    <ligand>
        <name>Ca(2+)</name>
        <dbReference type="ChEBI" id="CHEBI:29108"/>
        <label>1</label>
    </ligand>
</feature>
<feature type="binding site" evidence="2">
    <location>
        <position position="79"/>
    </location>
    <ligand>
        <name>Ca(2+)</name>
        <dbReference type="ChEBI" id="CHEBI:29108"/>
        <label>1</label>
    </ligand>
</feature>
<feature type="binding site" evidence="2">
    <location>
        <position position="79"/>
    </location>
    <ligand>
        <name>Ca(2+)</name>
        <dbReference type="ChEBI" id="CHEBI:29108"/>
        <label>2</label>
    </ligand>
</feature>
<feature type="binding site" evidence="2">
    <location>
        <position position="81"/>
    </location>
    <ligand>
        <name>Ca(2+)</name>
        <dbReference type="ChEBI" id="CHEBI:29108"/>
        <label>1</label>
    </ligand>
</feature>
<feature type="binding site" evidence="2">
    <location>
        <position position="81"/>
    </location>
    <ligand>
        <name>Ca(2+)</name>
        <dbReference type="ChEBI" id="CHEBI:29108"/>
        <label>2</label>
    </ligand>
</feature>
<feature type="binding site" evidence="2">
    <location>
        <position position="91"/>
    </location>
    <ligand>
        <name>Ca(2+)</name>
        <dbReference type="ChEBI" id="CHEBI:29108"/>
        <label>2</label>
    </ligand>
</feature>
<feature type="binding site" evidence="2">
    <location>
        <position position="152"/>
    </location>
    <ligand>
        <name>Ca(2+)</name>
        <dbReference type="ChEBI" id="CHEBI:29108"/>
        <label>3</label>
    </ligand>
</feature>
<feature type="binding site" evidence="2">
    <location>
        <position position="152"/>
    </location>
    <ligand>
        <name>Ca(2+)</name>
        <dbReference type="ChEBI" id="CHEBI:29108"/>
        <label>4</label>
    </ligand>
</feature>
<feature type="binding site" evidence="2">
    <location>
        <position position="158"/>
    </location>
    <ligand>
        <name>Ca(2+)</name>
        <dbReference type="ChEBI" id="CHEBI:29108"/>
        <label>3</label>
    </ligand>
</feature>
<feature type="binding site" evidence="2">
    <location>
        <position position="213"/>
    </location>
    <ligand>
        <name>Ca(2+)</name>
        <dbReference type="ChEBI" id="CHEBI:29108"/>
        <label>3</label>
    </ligand>
</feature>
<feature type="binding site" evidence="2">
    <location>
        <position position="213"/>
    </location>
    <ligand>
        <name>Ca(2+)</name>
        <dbReference type="ChEBI" id="CHEBI:29108"/>
        <label>4</label>
    </ligand>
</feature>
<feature type="binding site" evidence="2">
    <location>
        <position position="215"/>
    </location>
    <ligand>
        <name>Ca(2+)</name>
        <dbReference type="ChEBI" id="CHEBI:29108"/>
        <label>3</label>
    </ligand>
</feature>
<feature type="binding site" evidence="2">
    <location>
        <position position="215"/>
    </location>
    <ligand>
        <name>Ca(2+)</name>
        <dbReference type="ChEBI" id="CHEBI:29108"/>
        <label>4</label>
    </ligand>
</feature>
<feature type="binding site" evidence="2">
    <location>
        <position position="221"/>
    </location>
    <ligand>
        <name>Ca(2+)</name>
        <dbReference type="ChEBI" id="CHEBI:29108"/>
        <label>4</label>
    </ligand>
</feature>
<feature type="modified residue" description="N6-acetyllysine" evidence="1">
    <location>
        <position position="170"/>
    </location>
</feature>
<dbReference type="EMBL" id="AM747279">
    <property type="protein sequence ID" value="CAO00504.1"/>
    <property type="molecule type" value="mRNA"/>
</dbReference>
<dbReference type="EMBL" id="AABR07054396">
    <property type="status" value="NOT_ANNOTATED_CDS"/>
    <property type="molecule type" value="Genomic_DNA"/>
</dbReference>
<dbReference type="EMBL" id="AC118414">
    <property type="status" value="NOT_ANNOTATED_CDS"/>
    <property type="molecule type" value="Genomic_DNA"/>
</dbReference>
<dbReference type="EMBL" id="CH474050">
    <property type="protein sequence ID" value="EDL85869.1"/>
    <property type="molecule type" value="Genomic_DNA"/>
</dbReference>
<dbReference type="EMBL" id="CH474050">
    <property type="protein sequence ID" value="EDL85870.1"/>
    <property type="molecule type" value="Genomic_DNA"/>
</dbReference>
<dbReference type="EMBL" id="CH474050">
    <property type="protein sequence ID" value="EDL85872.1"/>
    <property type="molecule type" value="Genomic_DNA"/>
</dbReference>
<dbReference type="EMBL" id="CH474050">
    <property type="protein sequence ID" value="EDL85873.1"/>
    <property type="molecule type" value="Genomic_DNA"/>
</dbReference>
<dbReference type="RefSeq" id="NP_001243394.2">
    <property type="nucleotide sequence ID" value="NM_001256465.3"/>
</dbReference>
<dbReference type="RefSeq" id="XP_003749656.1">
    <property type="nucleotide sequence ID" value="XM_003749608.4"/>
</dbReference>
<dbReference type="RefSeq" id="XP_006235518.1">
    <property type="nucleotide sequence ID" value="XM_006235456.3"/>
</dbReference>
<dbReference type="RefSeq" id="XP_006235519.1">
    <property type="nucleotide sequence ID" value="XM_006235457.3"/>
</dbReference>
<dbReference type="RefSeq" id="XP_008760635.1">
    <property type="nucleotide sequence ID" value="XM_008762413.2"/>
</dbReference>
<dbReference type="RefSeq" id="XP_017447524.1">
    <property type="nucleotide sequence ID" value="XM_017592035.1"/>
</dbReference>
<dbReference type="RefSeq" id="XP_017447525.1">
    <property type="nucleotide sequence ID" value="XM_017592036.1"/>
</dbReference>
<dbReference type="RefSeq" id="XP_017447747.1">
    <property type="nucleotide sequence ID" value="XM_017592258.1"/>
</dbReference>
<dbReference type="RefSeq" id="XP_017447748.1">
    <property type="nucleotide sequence ID" value="XM_017592259.1"/>
</dbReference>
<dbReference type="SMR" id="D4A1R8"/>
<dbReference type="FunCoup" id="D4A1R8">
    <property type="interactions" value="2036"/>
</dbReference>
<dbReference type="STRING" id="10116.ENSRNOP00000026657"/>
<dbReference type="GlyGen" id="D4A1R8">
    <property type="glycosylation" value="1 site, 1 O-linked glycan (1 site)"/>
</dbReference>
<dbReference type="PhosphoSitePlus" id="D4A1R8"/>
<dbReference type="jPOST" id="D4A1R8"/>
<dbReference type="PaxDb" id="10116-ENSRNOP00000026657"/>
<dbReference type="PeptideAtlas" id="D4A1R8"/>
<dbReference type="Ensembl" id="ENSRNOT00000067490.4">
    <property type="protein sequence ID" value="ENSRNOP00000059795.2"/>
    <property type="gene ID" value="ENSRNOG00000069087.1"/>
</dbReference>
<dbReference type="GeneID" id="362249"/>
<dbReference type="KEGG" id="rno:362249"/>
<dbReference type="AGR" id="RGD:1311148"/>
<dbReference type="CTD" id="8904"/>
<dbReference type="RGD" id="1311148">
    <property type="gene designation" value="Cpne1"/>
</dbReference>
<dbReference type="eggNOG" id="KOG1327">
    <property type="taxonomic scope" value="Eukaryota"/>
</dbReference>
<dbReference type="GeneTree" id="ENSGT00940000162210"/>
<dbReference type="HOGENOM" id="CLU_020452_3_2_1"/>
<dbReference type="InParanoid" id="D4A1R8"/>
<dbReference type="Reactome" id="R-RNO-1483206">
    <property type="pathway name" value="Glycerophospholipid biosynthesis"/>
</dbReference>
<dbReference type="Reactome" id="R-RNO-6798695">
    <property type="pathway name" value="Neutrophil degranulation"/>
</dbReference>
<dbReference type="PRO" id="PR:D4A1R8"/>
<dbReference type="Proteomes" id="UP000002494">
    <property type="component" value="Chromosome 3"/>
</dbReference>
<dbReference type="Proteomes" id="UP000234681">
    <property type="component" value="Chromosome 3"/>
</dbReference>
<dbReference type="Bgee" id="ENSRNOG00000046990">
    <property type="expression patterns" value="Expressed in spleen and 18 other cell types or tissues"/>
</dbReference>
<dbReference type="GO" id="GO:0005737">
    <property type="term" value="C:cytoplasm"/>
    <property type="evidence" value="ECO:0000266"/>
    <property type="project" value="RGD"/>
</dbReference>
<dbReference type="GO" id="GO:0005829">
    <property type="term" value="C:cytosol"/>
    <property type="evidence" value="ECO:0000266"/>
    <property type="project" value="RGD"/>
</dbReference>
<dbReference type="GO" id="GO:0016020">
    <property type="term" value="C:membrane"/>
    <property type="evidence" value="ECO:0000266"/>
    <property type="project" value="RGD"/>
</dbReference>
<dbReference type="GO" id="GO:0005634">
    <property type="term" value="C:nucleus"/>
    <property type="evidence" value="ECO:0000266"/>
    <property type="project" value="RGD"/>
</dbReference>
<dbReference type="GO" id="GO:0005886">
    <property type="term" value="C:plasma membrane"/>
    <property type="evidence" value="ECO:0000318"/>
    <property type="project" value="GO_Central"/>
</dbReference>
<dbReference type="GO" id="GO:0005509">
    <property type="term" value="F:calcium ion binding"/>
    <property type="evidence" value="ECO:0000266"/>
    <property type="project" value="RGD"/>
</dbReference>
<dbReference type="GO" id="GO:0005544">
    <property type="term" value="F:calcium-dependent phospholipid binding"/>
    <property type="evidence" value="ECO:0000318"/>
    <property type="project" value="GO_Central"/>
</dbReference>
<dbReference type="GO" id="GO:0004175">
    <property type="term" value="F:endopeptidase activity"/>
    <property type="evidence" value="ECO:0000266"/>
    <property type="project" value="RGD"/>
</dbReference>
<dbReference type="GO" id="GO:0042802">
    <property type="term" value="F:identical protein binding"/>
    <property type="evidence" value="ECO:0000266"/>
    <property type="project" value="RGD"/>
</dbReference>
<dbReference type="GO" id="GO:0051059">
    <property type="term" value="F:NF-kappaB binding"/>
    <property type="evidence" value="ECO:0000266"/>
    <property type="project" value="RGD"/>
</dbReference>
<dbReference type="GO" id="GO:0001786">
    <property type="term" value="F:phosphatidylserine binding"/>
    <property type="evidence" value="ECO:0000266"/>
    <property type="project" value="RGD"/>
</dbReference>
<dbReference type="GO" id="GO:0071277">
    <property type="term" value="P:cellular response to calcium ion"/>
    <property type="evidence" value="ECO:0000266"/>
    <property type="project" value="RGD"/>
</dbReference>
<dbReference type="GO" id="GO:0010629">
    <property type="term" value="P:negative regulation of gene expression"/>
    <property type="evidence" value="ECO:0000266"/>
    <property type="project" value="RGD"/>
</dbReference>
<dbReference type="GO" id="GO:1901223">
    <property type="term" value="P:negative regulation of non-canonical NF-kappaB signal transduction"/>
    <property type="evidence" value="ECO:0000266"/>
    <property type="project" value="RGD"/>
</dbReference>
<dbReference type="GO" id="GO:1990138">
    <property type="term" value="P:neuron projection extension"/>
    <property type="evidence" value="ECO:0000266"/>
    <property type="project" value="RGD"/>
</dbReference>
<dbReference type="GO" id="GO:0045666">
    <property type="term" value="P:positive regulation of neuron differentiation"/>
    <property type="evidence" value="ECO:0000266"/>
    <property type="project" value="RGD"/>
</dbReference>
<dbReference type="GO" id="GO:0051897">
    <property type="term" value="P:positive regulation of phosphatidylinositol 3-kinase/protein kinase B signal transduction"/>
    <property type="evidence" value="ECO:0000266"/>
    <property type="project" value="RGD"/>
</dbReference>
<dbReference type="GO" id="GO:1903265">
    <property type="term" value="P:positive regulation of tumor necrosis factor-mediated signaling pathway"/>
    <property type="evidence" value="ECO:0000266"/>
    <property type="project" value="RGD"/>
</dbReference>
<dbReference type="GO" id="GO:0006508">
    <property type="term" value="P:proteolysis"/>
    <property type="evidence" value="ECO:0000266"/>
    <property type="project" value="RGD"/>
</dbReference>
<dbReference type="GO" id="GO:0043122">
    <property type="term" value="P:regulation of canonical NF-kappaB signal transduction"/>
    <property type="evidence" value="ECO:0000266"/>
    <property type="project" value="RGD"/>
</dbReference>
<dbReference type="CDD" id="cd04048">
    <property type="entry name" value="C2A_Copine"/>
    <property type="match status" value="1"/>
</dbReference>
<dbReference type="CDD" id="cd04047">
    <property type="entry name" value="C2B_Copine"/>
    <property type="match status" value="1"/>
</dbReference>
<dbReference type="CDD" id="cd01459">
    <property type="entry name" value="vWA_copine_like"/>
    <property type="match status" value="1"/>
</dbReference>
<dbReference type="FunFam" id="2.60.40.150:FF:000079">
    <property type="entry name" value="copine-1 isoform X2"/>
    <property type="match status" value="1"/>
</dbReference>
<dbReference type="FunFam" id="2.60.40.150:FF:000097">
    <property type="entry name" value="copine-1 isoform X2"/>
    <property type="match status" value="1"/>
</dbReference>
<dbReference type="Gene3D" id="2.60.40.150">
    <property type="entry name" value="C2 domain"/>
    <property type="match status" value="2"/>
</dbReference>
<dbReference type="Gene3D" id="3.40.50.410">
    <property type="entry name" value="von Willebrand factor, type A domain"/>
    <property type="match status" value="1"/>
</dbReference>
<dbReference type="InterPro" id="IPR000008">
    <property type="entry name" value="C2_dom"/>
</dbReference>
<dbReference type="InterPro" id="IPR035892">
    <property type="entry name" value="C2_domain_sf"/>
</dbReference>
<dbReference type="InterPro" id="IPR037768">
    <property type="entry name" value="C2B_Copine"/>
</dbReference>
<dbReference type="InterPro" id="IPR045052">
    <property type="entry name" value="Copine"/>
</dbReference>
<dbReference type="InterPro" id="IPR010734">
    <property type="entry name" value="Copine_C"/>
</dbReference>
<dbReference type="InterPro" id="IPR002035">
    <property type="entry name" value="VWF_A"/>
</dbReference>
<dbReference type="InterPro" id="IPR036465">
    <property type="entry name" value="vWFA_dom_sf"/>
</dbReference>
<dbReference type="PANTHER" id="PTHR10857">
    <property type="entry name" value="COPINE"/>
    <property type="match status" value="1"/>
</dbReference>
<dbReference type="PANTHER" id="PTHR10857:SF2">
    <property type="entry name" value="COPINE-1"/>
    <property type="match status" value="1"/>
</dbReference>
<dbReference type="Pfam" id="PF00168">
    <property type="entry name" value="C2"/>
    <property type="match status" value="2"/>
</dbReference>
<dbReference type="Pfam" id="PF07002">
    <property type="entry name" value="Copine"/>
    <property type="match status" value="1"/>
</dbReference>
<dbReference type="SMART" id="SM00239">
    <property type="entry name" value="C2"/>
    <property type="match status" value="2"/>
</dbReference>
<dbReference type="SMART" id="SM00327">
    <property type="entry name" value="VWA"/>
    <property type="match status" value="1"/>
</dbReference>
<dbReference type="SUPFAM" id="SSF49562">
    <property type="entry name" value="C2 domain (Calcium/lipid-binding domain, CaLB)"/>
    <property type="match status" value="2"/>
</dbReference>
<dbReference type="SUPFAM" id="SSF53300">
    <property type="entry name" value="vWA-like"/>
    <property type="match status" value="1"/>
</dbReference>
<dbReference type="PROSITE" id="PS50004">
    <property type="entry name" value="C2"/>
    <property type="match status" value="2"/>
</dbReference>
<name>CPNE1_RAT</name>
<reference evidence="6" key="1">
    <citation type="submission" date="2007-06" db="EMBL/GenBank/DDBJ databases">
        <title>Regulation of dendritic spine morphogenesis and synapse formation by Copine family members.</title>
        <authorList>
            <person name="Galic M."/>
            <person name="Kriz A."/>
            <person name="Vigot R."/>
            <person name="Reinhard J."/>
            <person name="Zhang Y.P."/>
            <person name="Bezakova G."/>
            <person name="Bentzinger C.F."/>
            <person name="Cloetta D."/>
            <person name="Stebler M."/>
            <person name="Bettler B."/>
            <person name="Oertner T.G."/>
            <person name="Ruegg M.A."/>
        </authorList>
    </citation>
    <scope>NUCLEOTIDE SEQUENCE [MRNA]</scope>
    <source>
        <strain evidence="6">Wistar</strain>
        <tissue evidence="6">Brain</tissue>
    </source>
</reference>
<reference key="2">
    <citation type="journal article" date="2004" name="Nature">
        <title>Genome sequence of the Brown Norway rat yields insights into mammalian evolution.</title>
        <authorList>
            <person name="Gibbs R.A."/>
            <person name="Weinstock G.M."/>
            <person name="Metzker M.L."/>
            <person name="Muzny D.M."/>
            <person name="Sodergren E.J."/>
            <person name="Scherer S."/>
            <person name="Scott G."/>
            <person name="Steffen D."/>
            <person name="Worley K.C."/>
            <person name="Burch P.E."/>
            <person name="Okwuonu G."/>
            <person name="Hines S."/>
            <person name="Lewis L."/>
            <person name="Deramo C."/>
            <person name="Delgado O."/>
            <person name="Dugan-Rocha S."/>
            <person name="Miner G."/>
            <person name="Morgan M."/>
            <person name="Hawes A."/>
            <person name="Gill R."/>
            <person name="Holt R.A."/>
            <person name="Adams M.D."/>
            <person name="Amanatides P.G."/>
            <person name="Baden-Tillson H."/>
            <person name="Barnstead M."/>
            <person name="Chin S."/>
            <person name="Evans C.A."/>
            <person name="Ferriera S."/>
            <person name="Fosler C."/>
            <person name="Glodek A."/>
            <person name="Gu Z."/>
            <person name="Jennings D."/>
            <person name="Kraft C.L."/>
            <person name="Nguyen T."/>
            <person name="Pfannkoch C.M."/>
            <person name="Sitter C."/>
            <person name="Sutton G.G."/>
            <person name="Venter J.C."/>
            <person name="Woodage T."/>
            <person name="Smith D."/>
            <person name="Lee H.-M."/>
            <person name="Gustafson E."/>
            <person name="Cahill P."/>
            <person name="Kana A."/>
            <person name="Doucette-Stamm L."/>
            <person name="Weinstock K."/>
            <person name="Fechtel K."/>
            <person name="Weiss R.B."/>
            <person name="Dunn D.M."/>
            <person name="Green E.D."/>
            <person name="Blakesley R.W."/>
            <person name="Bouffard G.G."/>
            <person name="De Jong P.J."/>
            <person name="Osoegawa K."/>
            <person name="Zhu B."/>
            <person name="Marra M."/>
            <person name="Schein J."/>
            <person name="Bosdet I."/>
            <person name="Fjell C."/>
            <person name="Jones S."/>
            <person name="Krzywinski M."/>
            <person name="Mathewson C."/>
            <person name="Siddiqui A."/>
            <person name="Wye N."/>
            <person name="McPherson J."/>
            <person name="Zhao S."/>
            <person name="Fraser C.M."/>
            <person name="Shetty J."/>
            <person name="Shatsman S."/>
            <person name="Geer K."/>
            <person name="Chen Y."/>
            <person name="Abramzon S."/>
            <person name="Nierman W.C."/>
            <person name="Havlak P.H."/>
            <person name="Chen R."/>
            <person name="Durbin K.J."/>
            <person name="Egan A."/>
            <person name="Ren Y."/>
            <person name="Song X.-Z."/>
            <person name="Li B."/>
            <person name="Liu Y."/>
            <person name="Qin X."/>
            <person name="Cawley S."/>
            <person name="Cooney A.J."/>
            <person name="D'Souza L.M."/>
            <person name="Martin K."/>
            <person name="Wu J.Q."/>
            <person name="Gonzalez-Garay M.L."/>
            <person name="Jackson A.R."/>
            <person name="Kalafus K.J."/>
            <person name="McLeod M.P."/>
            <person name="Milosavljevic A."/>
            <person name="Virk D."/>
            <person name="Volkov A."/>
            <person name="Wheeler D.A."/>
            <person name="Zhang Z."/>
            <person name="Bailey J.A."/>
            <person name="Eichler E.E."/>
            <person name="Tuzun E."/>
            <person name="Birney E."/>
            <person name="Mongin E."/>
            <person name="Ureta-Vidal A."/>
            <person name="Woodwark C."/>
            <person name="Zdobnov E."/>
            <person name="Bork P."/>
            <person name="Suyama M."/>
            <person name="Torrents D."/>
            <person name="Alexandersson M."/>
            <person name="Trask B.J."/>
            <person name="Young J.M."/>
            <person name="Huang H."/>
            <person name="Wang H."/>
            <person name="Xing H."/>
            <person name="Daniels S."/>
            <person name="Gietzen D."/>
            <person name="Schmidt J."/>
            <person name="Stevens K."/>
            <person name="Vitt U."/>
            <person name="Wingrove J."/>
            <person name="Camara F."/>
            <person name="Mar Alba M."/>
            <person name="Abril J.F."/>
            <person name="Guigo R."/>
            <person name="Smit A."/>
            <person name="Dubchak I."/>
            <person name="Rubin E.M."/>
            <person name="Couronne O."/>
            <person name="Poliakov A."/>
            <person name="Huebner N."/>
            <person name="Ganten D."/>
            <person name="Goesele C."/>
            <person name="Hummel O."/>
            <person name="Kreitler T."/>
            <person name="Lee Y.-A."/>
            <person name="Monti J."/>
            <person name="Schulz H."/>
            <person name="Zimdahl H."/>
            <person name="Himmelbauer H."/>
            <person name="Lehrach H."/>
            <person name="Jacob H.J."/>
            <person name="Bromberg S."/>
            <person name="Gullings-Handley J."/>
            <person name="Jensen-Seaman M.I."/>
            <person name="Kwitek A.E."/>
            <person name="Lazar J."/>
            <person name="Pasko D."/>
            <person name="Tonellato P.J."/>
            <person name="Twigger S."/>
            <person name="Ponting C.P."/>
            <person name="Duarte J.M."/>
            <person name="Rice S."/>
            <person name="Goodstadt L."/>
            <person name="Beatson S.A."/>
            <person name="Emes R.D."/>
            <person name="Winter E.E."/>
            <person name="Webber C."/>
            <person name="Brandt P."/>
            <person name="Nyakatura G."/>
            <person name="Adetobi M."/>
            <person name="Chiaromonte F."/>
            <person name="Elnitski L."/>
            <person name="Eswara P."/>
            <person name="Hardison R.C."/>
            <person name="Hou M."/>
            <person name="Kolbe D."/>
            <person name="Makova K."/>
            <person name="Miller W."/>
            <person name="Nekrutenko A."/>
            <person name="Riemer C."/>
            <person name="Schwartz S."/>
            <person name="Taylor J."/>
            <person name="Yang S."/>
            <person name="Zhang Y."/>
            <person name="Lindpaintner K."/>
            <person name="Andrews T.D."/>
            <person name="Caccamo M."/>
            <person name="Clamp M."/>
            <person name="Clarke L."/>
            <person name="Curwen V."/>
            <person name="Durbin R.M."/>
            <person name="Eyras E."/>
            <person name="Searle S.M."/>
            <person name="Cooper G.M."/>
            <person name="Batzoglou S."/>
            <person name="Brudno M."/>
            <person name="Sidow A."/>
            <person name="Stone E.A."/>
            <person name="Payseur B.A."/>
            <person name="Bourque G."/>
            <person name="Lopez-Otin C."/>
            <person name="Puente X.S."/>
            <person name="Chakrabarti K."/>
            <person name="Chatterji S."/>
            <person name="Dewey C."/>
            <person name="Pachter L."/>
            <person name="Bray N."/>
            <person name="Yap V.B."/>
            <person name="Caspi A."/>
            <person name="Tesler G."/>
            <person name="Pevzner P.A."/>
            <person name="Haussler D."/>
            <person name="Roskin K.M."/>
            <person name="Baertsch R."/>
            <person name="Clawson H."/>
            <person name="Furey T.S."/>
            <person name="Hinrichs A.S."/>
            <person name="Karolchik D."/>
            <person name="Kent W.J."/>
            <person name="Rosenbloom K.R."/>
            <person name="Trumbower H."/>
            <person name="Weirauch M."/>
            <person name="Cooper D.N."/>
            <person name="Stenson P.D."/>
            <person name="Ma B."/>
            <person name="Brent M."/>
            <person name="Arumugam M."/>
            <person name="Shteynberg D."/>
            <person name="Copley R.R."/>
            <person name="Taylor M.S."/>
            <person name="Riethman H."/>
            <person name="Mudunuri U."/>
            <person name="Peterson J."/>
            <person name="Guyer M."/>
            <person name="Felsenfeld A."/>
            <person name="Old S."/>
            <person name="Mockrin S."/>
            <person name="Collins F.S."/>
        </authorList>
    </citation>
    <scope>NUCLEOTIDE SEQUENCE [LARGE SCALE GENOMIC DNA]</scope>
    <source>
        <strain>Brown Norway</strain>
    </source>
</reference>
<reference key="3">
    <citation type="submission" date="2005-09" db="EMBL/GenBank/DDBJ databases">
        <authorList>
            <person name="Mural R.J."/>
            <person name="Adams M.D."/>
            <person name="Myers E.W."/>
            <person name="Smith H.O."/>
            <person name="Venter J.C."/>
        </authorList>
    </citation>
    <scope>NUCLEOTIDE SEQUENCE [LARGE SCALE GENOMIC DNA]</scope>
    <source>
        <strain evidence="7">Brown Norway</strain>
    </source>
</reference>
<reference key="4">
    <citation type="journal article" date="2000" name="Biochemistry">
        <title>Biochemical characterization of copine: a ubiquitous Ca2+-dependent, phospholipid-binding protein.</title>
        <authorList>
            <person name="Tomsig J.L."/>
            <person name="Creutz C.E."/>
        </authorList>
    </citation>
    <scope>TISSUE SPECIFICITY</scope>
</reference>
<organism>
    <name type="scientific">Rattus norvegicus</name>
    <name type="common">Rat</name>
    <dbReference type="NCBI Taxonomy" id="10116"/>
    <lineage>
        <taxon>Eukaryota</taxon>
        <taxon>Metazoa</taxon>
        <taxon>Chordata</taxon>
        <taxon>Craniata</taxon>
        <taxon>Vertebrata</taxon>
        <taxon>Euteleostomi</taxon>
        <taxon>Mammalia</taxon>
        <taxon>Eutheria</taxon>
        <taxon>Euarchontoglires</taxon>
        <taxon>Glires</taxon>
        <taxon>Rodentia</taxon>
        <taxon>Myomorpha</taxon>
        <taxon>Muroidea</taxon>
        <taxon>Muridae</taxon>
        <taxon>Murinae</taxon>
        <taxon>Rattus</taxon>
    </lineage>
</organism>
<accession>D4A1R8</accession>
<accession>D3ZSJ8</accession>
<accession>H1UBM6</accession>